<proteinExistence type="inferred from homology"/>
<keyword id="KW-0963">Cytoplasm</keyword>
<keyword id="KW-0489">Methyltransferase</keyword>
<keyword id="KW-1185">Reference proteome</keyword>
<keyword id="KW-0698">rRNA processing</keyword>
<keyword id="KW-0949">S-adenosyl-L-methionine</keyword>
<keyword id="KW-0808">Transferase</keyword>
<organism>
    <name type="scientific">Prochlorococcus marinus (strain MIT 9313)</name>
    <dbReference type="NCBI Taxonomy" id="74547"/>
    <lineage>
        <taxon>Bacteria</taxon>
        <taxon>Bacillati</taxon>
        <taxon>Cyanobacteriota</taxon>
        <taxon>Cyanophyceae</taxon>
        <taxon>Synechococcales</taxon>
        <taxon>Prochlorococcaceae</taxon>
        <taxon>Prochlorococcus</taxon>
    </lineage>
</organism>
<evidence type="ECO:0000255" key="1">
    <source>
        <dbReference type="HAMAP-Rule" id="MF_00658"/>
    </source>
</evidence>
<gene>
    <name evidence="1" type="primary">rlmH</name>
    <name type="ordered locus">PMT_0632</name>
</gene>
<name>RLMH_PROMM</name>
<comment type="function">
    <text evidence="1">Specifically methylates the pseudouridine at position 1915 (m3Psi1915) in 23S rRNA.</text>
</comment>
<comment type="catalytic activity">
    <reaction evidence="1">
        <text>pseudouridine(1915) in 23S rRNA + S-adenosyl-L-methionine = N(3)-methylpseudouridine(1915) in 23S rRNA + S-adenosyl-L-homocysteine + H(+)</text>
        <dbReference type="Rhea" id="RHEA:42752"/>
        <dbReference type="Rhea" id="RHEA-COMP:10221"/>
        <dbReference type="Rhea" id="RHEA-COMP:10222"/>
        <dbReference type="ChEBI" id="CHEBI:15378"/>
        <dbReference type="ChEBI" id="CHEBI:57856"/>
        <dbReference type="ChEBI" id="CHEBI:59789"/>
        <dbReference type="ChEBI" id="CHEBI:65314"/>
        <dbReference type="ChEBI" id="CHEBI:74486"/>
        <dbReference type="EC" id="2.1.1.177"/>
    </reaction>
</comment>
<comment type="subunit">
    <text evidence="1">Homodimer.</text>
</comment>
<comment type="subcellular location">
    <subcellularLocation>
        <location evidence="1">Cytoplasm</location>
    </subcellularLocation>
</comment>
<comment type="similarity">
    <text evidence="1">Belongs to the RNA methyltransferase RlmH family.</text>
</comment>
<protein>
    <recommendedName>
        <fullName evidence="1">Ribosomal RNA large subunit methyltransferase H</fullName>
        <ecNumber evidence="1">2.1.1.177</ecNumber>
    </recommendedName>
    <alternativeName>
        <fullName evidence="1">23S rRNA (pseudouridine1915-N3)-methyltransferase</fullName>
    </alternativeName>
    <alternativeName>
        <fullName evidence="1">23S rRNA m3Psi1915 methyltransferase</fullName>
    </alternativeName>
    <alternativeName>
        <fullName evidence="1">rRNA (pseudouridine-N3-)-methyltransferase RlmH</fullName>
    </alternativeName>
</protein>
<accession>Q7V7V1</accession>
<sequence>MRNCAFRIIAVGKVRKGWIQDGLAMYQKRLPGLIITEVRDASMPREAEAIRAALNSNEVLVPLSEEGEALTSVSFAKRLEKYGSQRLAFVIGGADGLSAELKNSTQWQLSLSAMTLPHELARLLLVEQLYRAQTITQGGKYHRS</sequence>
<feature type="chain" id="PRO_0000198160" description="Ribosomal RNA large subunit methyltransferase H">
    <location>
        <begin position="1"/>
        <end position="144"/>
    </location>
</feature>
<feature type="binding site" evidence="1">
    <location>
        <position position="63"/>
    </location>
    <ligand>
        <name>S-adenosyl-L-methionine</name>
        <dbReference type="ChEBI" id="CHEBI:59789"/>
    </ligand>
</feature>
<feature type="binding site" evidence="1">
    <location>
        <position position="92"/>
    </location>
    <ligand>
        <name>S-adenosyl-L-methionine</name>
        <dbReference type="ChEBI" id="CHEBI:59789"/>
    </ligand>
</feature>
<feature type="binding site" evidence="1">
    <location>
        <begin position="111"/>
        <end position="116"/>
    </location>
    <ligand>
        <name>S-adenosyl-L-methionine</name>
        <dbReference type="ChEBI" id="CHEBI:59789"/>
    </ligand>
</feature>
<reference key="1">
    <citation type="journal article" date="2003" name="Nature">
        <title>Genome divergence in two Prochlorococcus ecotypes reflects oceanic niche differentiation.</title>
        <authorList>
            <person name="Rocap G."/>
            <person name="Larimer F.W."/>
            <person name="Lamerdin J.E."/>
            <person name="Malfatti S."/>
            <person name="Chain P."/>
            <person name="Ahlgren N.A."/>
            <person name="Arellano A."/>
            <person name="Coleman M."/>
            <person name="Hauser L."/>
            <person name="Hess W.R."/>
            <person name="Johnson Z.I."/>
            <person name="Land M.L."/>
            <person name="Lindell D."/>
            <person name="Post A.F."/>
            <person name="Regala W."/>
            <person name="Shah M."/>
            <person name="Shaw S.L."/>
            <person name="Steglich C."/>
            <person name="Sullivan M.B."/>
            <person name="Ting C.S."/>
            <person name="Tolonen A."/>
            <person name="Webb E.A."/>
            <person name="Zinser E.R."/>
            <person name="Chisholm S.W."/>
        </authorList>
    </citation>
    <scope>NUCLEOTIDE SEQUENCE [LARGE SCALE GENOMIC DNA]</scope>
    <source>
        <strain>MIT 9313</strain>
    </source>
</reference>
<dbReference type="EC" id="2.1.1.177" evidence="1"/>
<dbReference type="EMBL" id="BX548175">
    <property type="protein sequence ID" value="CAE20807.1"/>
    <property type="molecule type" value="Genomic_DNA"/>
</dbReference>
<dbReference type="SMR" id="Q7V7V1"/>
<dbReference type="KEGG" id="pmt:PMT_0632"/>
<dbReference type="eggNOG" id="COG1576">
    <property type="taxonomic scope" value="Bacteria"/>
</dbReference>
<dbReference type="HOGENOM" id="CLU_100552_1_0_3"/>
<dbReference type="Proteomes" id="UP000001423">
    <property type="component" value="Chromosome"/>
</dbReference>
<dbReference type="GO" id="GO:0005737">
    <property type="term" value="C:cytoplasm"/>
    <property type="evidence" value="ECO:0007669"/>
    <property type="project" value="UniProtKB-SubCell"/>
</dbReference>
<dbReference type="GO" id="GO:0070038">
    <property type="term" value="F:rRNA (pseudouridine-N3-)-methyltransferase activity"/>
    <property type="evidence" value="ECO:0007669"/>
    <property type="project" value="UniProtKB-UniRule"/>
</dbReference>
<dbReference type="CDD" id="cd18081">
    <property type="entry name" value="RlmH-like"/>
    <property type="match status" value="1"/>
</dbReference>
<dbReference type="Gene3D" id="3.40.1280.10">
    <property type="match status" value="1"/>
</dbReference>
<dbReference type="HAMAP" id="MF_00658">
    <property type="entry name" value="23SrRNA_methyltr_H"/>
    <property type="match status" value="1"/>
</dbReference>
<dbReference type="InterPro" id="IPR029028">
    <property type="entry name" value="Alpha/beta_knot_MTases"/>
</dbReference>
<dbReference type="InterPro" id="IPR003742">
    <property type="entry name" value="RlmH-like"/>
</dbReference>
<dbReference type="InterPro" id="IPR029026">
    <property type="entry name" value="tRNA_m1G_MTases_N"/>
</dbReference>
<dbReference type="PANTHER" id="PTHR33603">
    <property type="entry name" value="METHYLTRANSFERASE"/>
    <property type="match status" value="1"/>
</dbReference>
<dbReference type="PANTHER" id="PTHR33603:SF1">
    <property type="entry name" value="RIBOSOMAL RNA LARGE SUBUNIT METHYLTRANSFERASE H"/>
    <property type="match status" value="1"/>
</dbReference>
<dbReference type="Pfam" id="PF02590">
    <property type="entry name" value="SPOUT_MTase"/>
    <property type="match status" value="1"/>
</dbReference>
<dbReference type="PIRSF" id="PIRSF004505">
    <property type="entry name" value="MT_bac"/>
    <property type="match status" value="1"/>
</dbReference>
<dbReference type="SUPFAM" id="SSF75217">
    <property type="entry name" value="alpha/beta knot"/>
    <property type="match status" value="1"/>
</dbReference>